<reference evidence="5" key="1">
    <citation type="journal article" date="2007" name="Nature">
        <title>Evolution of genes and genomes on the Drosophila phylogeny.</title>
        <authorList>
            <consortium name="Drosophila 12 genomes consortium"/>
        </authorList>
    </citation>
    <scope>NUCLEOTIDE SEQUENCE [LARGE SCALE GENOMIC DNA]</scope>
</reference>
<protein>
    <recommendedName>
        <fullName evidence="3">Dolichyl-diphosphooligosaccharide--protein glycosyltransferase subunit 4</fullName>
    </recommendedName>
</protein>
<proteinExistence type="inferred from homology"/>
<organism>
    <name type="scientific">Drosophila simulans</name>
    <name type="common">Fruit fly</name>
    <dbReference type="NCBI Taxonomy" id="7240"/>
    <lineage>
        <taxon>Eukaryota</taxon>
        <taxon>Metazoa</taxon>
        <taxon>Ecdysozoa</taxon>
        <taxon>Arthropoda</taxon>
        <taxon>Hexapoda</taxon>
        <taxon>Insecta</taxon>
        <taxon>Pterygota</taxon>
        <taxon>Neoptera</taxon>
        <taxon>Endopterygota</taxon>
        <taxon>Diptera</taxon>
        <taxon>Brachycera</taxon>
        <taxon>Muscomorpha</taxon>
        <taxon>Ephydroidea</taxon>
        <taxon>Drosophilidae</taxon>
        <taxon>Drosophila</taxon>
        <taxon>Sophophora</taxon>
    </lineage>
</organism>
<comment type="function">
    <text evidence="2">Subunit of the oligosaccharyl transferase (OST) complex that catalyzes the initial transfer of a defined glycan (Glc(3)Man(9)GlcNAc(2) in eukaryotes) from the lipid carrier dolichol-pyrophosphate to an asparagine residue within an Asn-X-Ser/Thr consensus motif in nascent polypeptide chains, the first step in protein N-glycosylation. N-glycosylation occurs cotranslationally and the complex associates with the Sec61 complex at the channel-forming translocon complex that mediates protein translocation across the endoplasmic reticulum (ER). All subunits are required for a maximal enzyme activity.</text>
</comment>
<comment type="subunit">
    <text evidence="2">Component of the oligosaccharyltransferase (OST) complex.</text>
</comment>
<comment type="subcellular location">
    <subcellularLocation>
        <location evidence="1">Endoplasmic reticulum membrane</location>
        <topology evidence="1">Single-pass type III membrane protein</topology>
    </subcellularLocation>
</comment>
<comment type="similarity">
    <text evidence="4">Belongs to the OST4 family.</text>
</comment>
<gene>
    <name type="ORF">GD10077</name>
</gene>
<accession>B4QH87</accession>
<evidence type="ECO:0000250" key="1"/>
<evidence type="ECO:0000250" key="2">
    <source>
        <dbReference type="UniProtKB" id="P0C6T2"/>
    </source>
</evidence>
<evidence type="ECO:0000250" key="3">
    <source>
        <dbReference type="UniProtKB" id="Q99380"/>
    </source>
</evidence>
<evidence type="ECO:0000255" key="4"/>
<evidence type="ECO:0000312" key="5">
    <source>
        <dbReference type="EMBL" id="EDX06341.1"/>
    </source>
</evidence>
<name>OST4_DROSI</name>
<dbReference type="EMBL" id="CM000362">
    <property type="protein sequence ID" value="EDX06341.1"/>
    <property type="molecule type" value="Genomic_DNA"/>
</dbReference>
<dbReference type="SMR" id="B4QH87"/>
<dbReference type="STRING" id="7240.B4QH87"/>
<dbReference type="EnsemblMetazoa" id="FBtr0209987">
    <property type="protein sequence ID" value="FBpp0208479"/>
    <property type="gene ID" value="FBgn0181852"/>
</dbReference>
<dbReference type="EnsemblMetazoa" id="XM_016167175.2">
    <property type="protein sequence ID" value="XP_016026676.1"/>
    <property type="gene ID" value="LOC6733709"/>
</dbReference>
<dbReference type="GeneID" id="6733709"/>
<dbReference type="HOGENOM" id="CLU_186352_2_0_1"/>
<dbReference type="PhylomeDB" id="B4QH87"/>
<dbReference type="Proteomes" id="UP000000304">
    <property type="component" value="Chromosome 2R"/>
</dbReference>
<dbReference type="Bgee" id="FBgn0181852">
    <property type="expression patterns" value="Expressed in embryo and 3 other cell types or tissues"/>
</dbReference>
<dbReference type="GO" id="GO:0008250">
    <property type="term" value="C:oligosaccharyltransferase complex"/>
    <property type="evidence" value="ECO:0000250"/>
    <property type="project" value="UniProtKB"/>
</dbReference>
<dbReference type="GO" id="GO:0006487">
    <property type="term" value="P:protein N-linked glycosylation"/>
    <property type="evidence" value="ECO:0000250"/>
    <property type="project" value="UniProtKB"/>
</dbReference>
<dbReference type="GO" id="GO:0018279">
    <property type="term" value="P:protein N-linked glycosylation via asparagine"/>
    <property type="evidence" value="ECO:0007669"/>
    <property type="project" value="TreeGrafter"/>
</dbReference>
<dbReference type="InterPro" id="IPR018943">
    <property type="entry name" value="Oligosaccaryltransferase"/>
</dbReference>
<dbReference type="InterPro" id="IPR051307">
    <property type="entry name" value="OST4"/>
</dbReference>
<dbReference type="InterPro" id="IPR036330">
    <property type="entry name" value="Ost4p_sf"/>
</dbReference>
<dbReference type="PANTHER" id="PTHR48164">
    <property type="entry name" value="DOLICHYL-DIPHOSPHOOLIGOSACCHARIDE--PROTEIN GLYCOSYLTRANSFERASE SUBUNIT 4"/>
    <property type="match status" value="1"/>
</dbReference>
<dbReference type="PANTHER" id="PTHR48164:SF1">
    <property type="entry name" value="DOLICHYL-DIPHOSPHOOLIGOSACCHARIDE--PROTEIN GLYCOSYLTRANSFERASE SUBUNIT 4"/>
    <property type="match status" value="1"/>
</dbReference>
<dbReference type="Pfam" id="PF10215">
    <property type="entry name" value="Ost4"/>
    <property type="match status" value="1"/>
</dbReference>
<dbReference type="SUPFAM" id="SSF103464">
    <property type="entry name" value="Oligosaccharyltransferase subunit ost4p"/>
    <property type="match status" value="1"/>
</dbReference>
<keyword id="KW-0256">Endoplasmic reticulum</keyword>
<keyword id="KW-0472">Membrane</keyword>
<keyword id="KW-1185">Reference proteome</keyword>
<keyword id="KW-0735">Signal-anchor</keyword>
<keyword id="KW-0812">Transmembrane</keyword>
<keyword id="KW-1133">Transmembrane helix</keyword>
<sequence>MITDMQLAIFSNVLGVFLFLLVVAYHYINANTGKPSAKAK</sequence>
<feature type="chain" id="PRO_0000386615" description="Dolichyl-diphosphooligosaccharide--protein glycosyltransferase subunit 4">
    <location>
        <begin position="1"/>
        <end position="40"/>
    </location>
</feature>
<feature type="topological domain" description="Lumenal" evidence="4">
    <location>
        <begin position="1"/>
        <end position="7"/>
    </location>
</feature>
<feature type="transmembrane region" description="Helical" evidence="4">
    <location>
        <begin position="8"/>
        <end position="28"/>
    </location>
</feature>
<feature type="topological domain" description="Cytoplasmic" evidence="4">
    <location>
        <begin position="29"/>
        <end position="40"/>
    </location>
</feature>